<name>DEOC_RHOBA</name>
<reference key="1">
    <citation type="journal article" date="2003" name="Proc. Natl. Acad. Sci. U.S.A.">
        <title>Complete genome sequence of the marine planctomycete Pirellula sp. strain 1.</title>
        <authorList>
            <person name="Gloeckner F.O."/>
            <person name="Kube M."/>
            <person name="Bauer M."/>
            <person name="Teeling H."/>
            <person name="Lombardot T."/>
            <person name="Ludwig W."/>
            <person name="Gade D."/>
            <person name="Beck A."/>
            <person name="Borzym K."/>
            <person name="Heitmann K."/>
            <person name="Rabus R."/>
            <person name="Schlesner H."/>
            <person name="Amann R."/>
            <person name="Reinhardt R."/>
        </authorList>
    </citation>
    <scope>NUCLEOTIDE SEQUENCE [LARGE SCALE GENOMIC DNA]</scope>
    <source>
        <strain>DSM 10527 / NCIMB 13988 / SH1</strain>
    </source>
</reference>
<sequence length="241" mass="25942">MADYQYHDVSKMIDHSLLPPTLTEADLDSGIDLAIAYEVASVCILPYYLKRCAAKLAGTGVKASTTIGFPHGGHTTAIKKAEAEQAIQDGCEELDFVVNISQVLSGGWDYVQNEIGEVTELTHAAGQKIKVIFENCYLQDEHKIRLCEICTELKVDWVKTSTGYGTGGATMDDLRLMRQHSGENVQVKAAGGVRDLATLLEVRALGASRCGASRTAEMLGEARKQLGMPAIEITATGSSGY</sequence>
<protein>
    <recommendedName>
        <fullName evidence="1">Deoxyribose-phosphate aldolase</fullName>
        <shortName evidence="1">DERA</shortName>
        <ecNumber evidence="1">4.1.2.4</ecNumber>
    </recommendedName>
    <alternativeName>
        <fullName evidence="1">2-deoxy-D-ribose 5-phosphate aldolase</fullName>
    </alternativeName>
    <alternativeName>
        <fullName evidence="1">Phosphodeoxyriboaldolase</fullName>
        <shortName evidence="1">Deoxyriboaldolase</shortName>
    </alternativeName>
</protein>
<accession>Q7UPT7</accession>
<dbReference type="EC" id="4.1.2.4" evidence="1"/>
<dbReference type="EMBL" id="BX294144">
    <property type="protein sequence ID" value="CAD74972.1"/>
    <property type="status" value="ALT_INIT"/>
    <property type="molecule type" value="Genomic_DNA"/>
</dbReference>
<dbReference type="RefSeq" id="NP_867426.1">
    <property type="nucleotide sequence ID" value="NC_005027.1"/>
</dbReference>
<dbReference type="RefSeq" id="WP_037228457.1">
    <property type="nucleotide sequence ID" value="NC_005027.1"/>
</dbReference>
<dbReference type="SMR" id="Q7UPT7"/>
<dbReference type="FunCoup" id="Q7UPT7">
    <property type="interactions" value="430"/>
</dbReference>
<dbReference type="STRING" id="243090.RB6729"/>
<dbReference type="EnsemblBacteria" id="CAD74972">
    <property type="protein sequence ID" value="CAD74972"/>
    <property type="gene ID" value="RB6729"/>
</dbReference>
<dbReference type="KEGG" id="rba:RB6729"/>
<dbReference type="PATRIC" id="fig|243090.15.peg.3262"/>
<dbReference type="eggNOG" id="COG0274">
    <property type="taxonomic scope" value="Bacteria"/>
</dbReference>
<dbReference type="HOGENOM" id="CLU_053595_0_2_0"/>
<dbReference type="InParanoid" id="Q7UPT7"/>
<dbReference type="OrthoDB" id="9778711at2"/>
<dbReference type="UniPathway" id="UPA00002">
    <property type="reaction ID" value="UER00468"/>
</dbReference>
<dbReference type="Proteomes" id="UP000001025">
    <property type="component" value="Chromosome"/>
</dbReference>
<dbReference type="GO" id="GO:0005737">
    <property type="term" value="C:cytoplasm"/>
    <property type="evidence" value="ECO:0007669"/>
    <property type="project" value="UniProtKB-SubCell"/>
</dbReference>
<dbReference type="GO" id="GO:0004139">
    <property type="term" value="F:deoxyribose-phosphate aldolase activity"/>
    <property type="evidence" value="ECO:0000318"/>
    <property type="project" value="GO_Central"/>
</dbReference>
<dbReference type="GO" id="GO:0006018">
    <property type="term" value="P:2-deoxyribose 1-phosphate catabolic process"/>
    <property type="evidence" value="ECO:0007669"/>
    <property type="project" value="UniProtKB-UniRule"/>
</dbReference>
<dbReference type="GO" id="GO:0016052">
    <property type="term" value="P:carbohydrate catabolic process"/>
    <property type="evidence" value="ECO:0000318"/>
    <property type="project" value="GO_Central"/>
</dbReference>
<dbReference type="GO" id="GO:0009264">
    <property type="term" value="P:deoxyribonucleotide catabolic process"/>
    <property type="evidence" value="ECO:0000318"/>
    <property type="project" value="GO_Central"/>
</dbReference>
<dbReference type="CDD" id="cd00959">
    <property type="entry name" value="DeoC"/>
    <property type="match status" value="1"/>
</dbReference>
<dbReference type="FunFam" id="3.20.20.70:FF:000198">
    <property type="entry name" value="Deoxyribose-phosphate aldolase"/>
    <property type="match status" value="1"/>
</dbReference>
<dbReference type="Gene3D" id="3.20.20.70">
    <property type="entry name" value="Aldolase class I"/>
    <property type="match status" value="1"/>
</dbReference>
<dbReference type="HAMAP" id="MF_00114">
    <property type="entry name" value="DeoC_type1"/>
    <property type="match status" value="1"/>
</dbReference>
<dbReference type="InterPro" id="IPR013785">
    <property type="entry name" value="Aldolase_TIM"/>
</dbReference>
<dbReference type="InterPro" id="IPR011343">
    <property type="entry name" value="DeoC"/>
</dbReference>
<dbReference type="InterPro" id="IPR002915">
    <property type="entry name" value="DeoC/FbaB/LacD_aldolase"/>
</dbReference>
<dbReference type="InterPro" id="IPR028581">
    <property type="entry name" value="DeoC_typeI"/>
</dbReference>
<dbReference type="NCBIfam" id="TIGR00126">
    <property type="entry name" value="deoC"/>
    <property type="match status" value="1"/>
</dbReference>
<dbReference type="PANTHER" id="PTHR10889">
    <property type="entry name" value="DEOXYRIBOSE-PHOSPHATE ALDOLASE"/>
    <property type="match status" value="1"/>
</dbReference>
<dbReference type="PANTHER" id="PTHR10889:SF1">
    <property type="entry name" value="DEOXYRIBOSE-PHOSPHATE ALDOLASE"/>
    <property type="match status" value="1"/>
</dbReference>
<dbReference type="Pfam" id="PF01791">
    <property type="entry name" value="DeoC"/>
    <property type="match status" value="1"/>
</dbReference>
<dbReference type="PIRSF" id="PIRSF001357">
    <property type="entry name" value="DeoC"/>
    <property type="match status" value="1"/>
</dbReference>
<dbReference type="SMART" id="SM01133">
    <property type="entry name" value="DeoC"/>
    <property type="match status" value="1"/>
</dbReference>
<dbReference type="SUPFAM" id="SSF51569">
    <property type="entry name" value="Aldolase"/>
    <property type="match status" value="1"/>
</dbReference>
<proteinExistence type="inferred from homology"/>
<keyword id="KW-0963">Cytoplasm</keyword>
<keyword id="KW-0456">Lyase</keyword>
<keyword id="KW-1185">Reference proteome</keyword>
<keyword id="KW-0704">Schiff base</keyword>
<gene>
    <name evidence="1" type="primary">deoC</name>
    <name type="ordered locus">RB6729</name>
</gene>
<comment type="function">
    <text evidence="1">Catalyzes a reversible aldol reaction between acetaldehyde and D-glyceraldehyde 3-phosphate to generate 2-deoxy-D-ribose 5-phosphate.</text>
</comment>
<comment type="catalytic activity">
    <reaction evidence="1">
        <text>2-deoxy-D-ribose 5-phosphate = D-glyceraldehyde 3-phosphate + acetaldehyde</text>
        <dbReference type="Rhea" id="RHEA:12821"/>
        <dbReference type="ChEBI" id="CHEBI:15343"/>
        <dbReference type="ChEBI" id="CHEBI:59776"/>
        <dbReference type="ChEBI" id="CHEBI:62877"/>
        <dbReference type="EC" id="4.1.2.4"/>
    </reaction>
</comment>
<comment type="pathway">
    <text evidence="1">Carbohydrate degradation; 2-deoxy-D-ribose 1-phosphate degradation; D-glyceraldehyde 3-phosphate and acetaldehyde from 2-deoxy-alpha-D-ribose 1-phosphate: step 2/2.</text>
</comment>
<comment type="subcellular location">
    <subcellularLocation>
        <location evidence="1">Cytoplasm</location>
    </subcellularLocation>
</comment>
<comment type="similarity">
    <text evidence="1">Belongs to the DeoC/FbaB aldolase family. DeoC type 1 subfamily.</text>
</comment>
<comment type="sequence caution" evidence="2">
    <conflict type="erroneous initiation">
        <sequence resource="EMBL-CDS" id="CAD74972"/>
    </conflict>
</comment>
<feature type="chain" id="PRO_0000057254" description="Deoxyribose-phosphate aldolase">
    <location>
        <begin position="1"/>
        <end position="241"/>
    </location>
</feature>
<feature type="active site" description="Proton donor/acceptor" evidence="1">
    <location>
        <position position="95"/>
    </location>
</feature>
<feature type="active site" description="Schiff-base intermediate with acetaldehyde" evidence="1">
    <location>
        <position position="159"/>
    </location>
</feature>
<feature type="active site" description="Proton donor/acceptor" evidence="1">
    <location>
        <position position="188"/>
    </location>
</feature>
<evidence type="ECO:0000255" key="1">
    <source>
        <dbReference type="HAMAP-Rule" id="MF_00114"/>
    </source>
</evidence>
<evidence type="ECO:0000305" key="2"/>
<organism>
    <name type="scientific">Rhodopirellula baltica (strain DSM 10527 / NCIMB 13988 / SH1)</name>
    <dbReference type="NCBI Taxonomy" id="243090"/>
    <lineage>
        <taxon>Bacteria</taxon>
        <taxon>Pseudomonadati</taxon>
        <taxon>Planctomycetota</taxon>
        <taxon>Planctomycetia</taxon>
        <taxon>Pirellulales</taxon>
        <taxon>Pirellulaceae</taxon>
        <taxon>Rhodopirellula</taxon>
    </lineage>
</organism>